<feature type="chain" id="PRO_0000103841" description="Uncharacterized protein Rv1414">
    <location>
        <begin position="1"/>
        <end position="133"/>
    </location>
</feature>
<proteinExistence type="predicted"/>
<organism>
    <name type="scientific">Mycobacterium tuberculosis (strain ATCC 25618 / H37Rv)</name>
    <dbReference type="NCBI Taxonomy" id="83332"/>
    <lineage>
        <taxon>Bacteria</taxon>
        <taxon>Bacillati</taxon>
        <taxon>Actinomycetota</taxon>
        <taxon>Actinomycetes</taxon>
        <taxon>Mycobacteriales</taxon>
        <taxon>Mycobacteriaceae</taxon>
        <taxon>Mycobacterium</taxon>
        <taxon>Mycobacterium tuberculosis complex</taxon>
    </lineage>
</organism>
<name>Y1414_MYCTU</name>
<gene>
    <name type="ordered locus">Rv1414</name>
    <name type="ORF">MTCY21B4.31</name>
</gene>
<dbReference type="EMBL" id="AL123456">
    <property type="protein sequence ID" value="CCP44173.1"/>
    <property type="molecule type" value="Genomic_DNA"/>
</dbReference>
<dbReference type="PIR" id="C70902">
    <property type="entry name" value="C70902"/>
</dbReference>
<dbReference type="RefSeq" id="NP_215930.1">
    <property type="nucleotide sequence ID" value="NC_000962.3"/>
</dbReference>
<dbReference type="RefSeq" id="WP_003407330.1">
    <property type="nucleotide sequence ID" value="NC_000962.3"/>
</dbReference>
<dbReference type="SMR" id="P9WLY3"/>
<dbReference type="STRING" id="83332.Rv1414"/>
<dbReference type="PaxDb" id="83332-Rv1414"/>
<dbReference type="DNASU" id="886696"/>
<dbReference type="GeneID" id="886696"/>
<dbReference type="KEGG" id="mtu:Rv1414"/>
<dbReference type="KEGG" id="mtv:RVBD_1414"/>
<dbReference type="TubercuList" id="Rv1414"/>
<dbReference type="eggNOG" id="COG3616">
    <property type="taxonomic scope" value="Bacteria"/>
</dbReference>
<dbReference type="InParanoid" id="P9WLY3"/>
<dbReference type="OrthoDB" id="9811417at2"/>
<dbReference type="PhylomeDB" id="P9WLY3"/>
<dbReference type="Proteomes" id="UP000001584">
    <property type="component" value="Chromosome"/>
</dbReference>
<dbReference type="Gene3D" id="2.40.37.20">
    <property type="entry name" value="D-serine dehydratase-like domain"/>
    <property type="match status" value="1"/>
</dbReference>
<dbReference type="InterPro" id="IPR051466">
    <property type="entry name" value="D-amino_acid_metab_enzyme"/>
</dbReference>
<dbReference type="InterPro" id="IPR026956">
    <property type="entry name" value="D-ser_dehydrat-like_dom"/>
</dbReference>
<dbReference type="InterPro" id="IPR042208">
    <property type="entry name" value="D-ser_dehydrat-like_sf"/>
</dbReference>
<dbReference type="PANTHER" id="PTHR28004:SF2">
    <property type="entry name" value="D-SERINE DEHYDRATASE"/>
    <property type="match status" value="1"/>
</dbReference>
<dbReference type="PANTHER" id="PTHR28004">
    <property type="entry name" value="ZGC:162816-RELATED"/>
    <property type="match status" value="1"/>
</dbReference>
<dbReference type="Pfam" id="PF14031">
    <property type="entry name" value="D-ser_dehydrat"/>
    <property type="match status" value="1"/>
</dbReference>
<dbReference type="SMART" id="SM01119">
    <property type="entry name" value="D-ser_dehydrat"/>
    <property type="match status" value="1"/>
</dbReference>
<accession>P9WLY3</accession>
<accession>L0T9K2</accession>
<accession>P64845</accession>
<accession>P71683</accession>
<keyword id="KW-1185">Reference proteome</keyword>
<sequence length="133" mass="14330">MLGDAQQLELGRCAPADIALTVAATVVSRQDCRSGLRRIVLDCGSKILGSDRPAWATGFGRLIDHADARIAALSEHHATVVWPDDAPLPPVGTRLRVIPNHVCLTTNLVDDVAVVRDATLIDRWKVAARGKNH</sequence>
<protein>
    <recommendedName>
        <fullName>Uncharacterized protein Rv1414</fullName>
    </recommendedName>
</protein>
<reference key="1">
    <citation type="journal article" date="1998" name="Nature">
        <title>Deciphering the biology of Mycobacterium tuberculosis from the complete genome sequence.</title>
        <authorList>
            <person name="Cole S.T."/>
            <person name="Brosch R."/>
            <person name="Parkhill J."/>
            <person name="Garnier T."/>
            <person name="Churcher C.M."/>
            <person name="Harris D.E."/>
            <person name="Gordon S.V."/>
            <person name="Eiglmeier K."/>
            <person name="Gas S."/>
            <person name="Barry C.E. III"/>
            <person name="Tekaia F."/>
            <person name="Badcock K."/>
            <person name="Basham D."/>
            <person name="Brown D."/>
            <person name="Chillingworth T."/>
            <person name="Connor R."/>
            <person name="Davies R.M."/>
            <person name="Devlin K."/>
            <person name="Feltwell T."/>
            <person name="Gentles S."/>
            <person name="Hamlin N."/>
            <person name="Holroyd S."/>
            <person name="Hornsby T."/>
            <person name="Jagels K."/>
            <person name="Krogh A."/>
            <person name="McLean J."/>
            <person name="Moule S."/>
            <person name="Murphy L.D."/>
            <person name="Oliver S."/>
            <person name="Osborne J."/>
            <person name="Quail M.A."/>
            <person name="Rajandream M.A."/>
            <person name="Rogers J."/>
            <person name="Rutter S."/>
            <person name="Seeger K."/>
            <person name="Skelton S."/>
            <person name="Squares S."/>
            <person name="Squares R."/>
            <person name="Sulston J.E."/>
            <person name="Taylor K."/>
            <person name="Whitehead S."/>
            <person name="Barrell B.G."/>
        </authorList>
    </citation>
    <scope>NUCLEOTIDE SEQUENCE [LARGE SCALE GENOMIC DNA]</scope>
    <source>
        <strain>ATCC 25618 / H37Rv</strain>
    </source>
</reference>